<name>CPXT_SYNPZ</name>
<evidence type="ECO:0000255" key="1">
    <source>
        <dbReference type="HAMAP-Rule" id="MF_01460"/>
    </source>
</evidence>
<sequence length="197" mass="22463">MITPNVRRFLNLLCGEYSNQQQAFDNPPLYAHIFLRYRSLPQLKPGSILLEQTYAVDPKNPYRLRMIRAEEQPSGAIKLWNHTFQDPARFAGATFDPALRRSIQTPDLISLDQCHYQVVEQSDGYHGAMEPGCQCIVRRDGKDTVLVSSFHLQGESLQTLDRGHDPITNERCWGSVAGPFRFKRTQSWAADLASAWL</sequence>
<reference key="1">
    <citation type="journal article" date="1993" name="Plant Mol. Biol.">
        <title>Genes of the R-phycocyanin II locus of marine Synechococcus spp., and comparison of protein-chromophore interactions in phycocyanins differing in bilin composition.</title>
        <authorList>
            <person name="de Lorimier R."/>
            <person name="Wilbanks S.M."/>
            <person name="Glazer A.N."/>
        </authorList>
    </citation>
    <scope>NUCLEOTIDE SEQUENCE [GENOMIC DNA]</scope>
</reference>
<feature type="chain" id="PRO_0000199298" description="Chromophore lyase CpcT/CpeT">
    <location>
        <begin position="1"/>
        <end position="197"/>
    </location>
</feature>
<accession>Q02426</accession>
<proteinExistence type="inferred from homology"/>
<comment type="function">
    <text evidence="1">Covalently attaches a chromophore to Cys residue(s) of phycobiliproteins.</text>
</comment>
<comment type="similarity">
    <text evidence="1">Belongs to the CpcT/CpeT biliprotein lyase family.</text>
</comment>
<dbReference type="EC" id="4.-.-.-" evidence="1"/>
<dbReference type="EMBL" id="M95289">
    <property type="protein sequence ID" value="AAA27367.1"/>
    <property type="molecule type" value="Genomic_DNA"/>
</dbReference>
<dbReference type="PIR" id="S31074">
    <property type="entry name" value="S31074"/>
</dbReference>
<dbReference type="SMR" id="Q02426"/>
<dbReference type="KEGG" id="synw:SynWH8103_02328"/>
<dbReference type="OrthoDB" id="509174at2"/>
<dbReference type="GO" id="GO:0016829">
    <property type="term" value="F:lyase activity"/>
    <property type="evidence" value="ECO:0007669"/>
    <property type="project" value="UniProtKB-KW"/>
</dbReference>
<dbReference type="CDD" id="cd16338">
    <property type="entry name" value="CpcT"/>
    <property type="match status" value="1"/>
</dbReference>
<dbReference type="Gene3D" id="2.40.128.590">
    <property type="entry name" value="CpcT/CpeT domain"/>
    <property type="match status" value="1"/>
</dbReference>
<dbReference type="HAMAP" id="MF_01460">
    <property type="entry name" value="Chrphore_lyase_CpxT"/>
    <property type="match status" value="1"/>
</dbReference>
<dbReference type="InterPro" id="IPR010404">
    <property type="entry name" value="CpcT/CpeT"/>
</dbReference>
<dbReference type="InterPro" id="IPR038672">
    <property type="entry name" value="CpcT/CpeT_sf"/>
</dbReference>
<dbReference type="PANTHER" id="PTHR35137">
    <property type="entry name" value="CHROMOPHORE LYASE CRL, CHLOROPLASTIC"/>
    <property type="match status" value="1"/>
</dbReference>
<dbReference type="PANTHER" id="PTHR35137:SF1">
    <property type="entry name" value="CHROMOPHORE LYASE CRL, CHLOROPLASTIC"/>
    <property type="match status" value="1"/>
</dbReference>
<dbReference type="Pfam" id="PF06206">
    <property type="entry name" value="CpeT"/>
    <property type="match status" value="1"/>
</dbReference>
<protein>
    <recommendedName>
        <fullName evidence="1">Chromophore lyase CpcT/CpeT</fullName>
        <ecNumber evidence="1">4.-.-.-</ecNumber>
    </recommendedName>
</protein>
<organism>
    <name type="scientific">Synechococcus sp. (strain WH8103)</name>
    <dbReference type="NCBI Taxonomy" id="29410"/>
    <lineage>
        <taxon>Bacteria</taxon>
        <taxon>Bacillati</taxon>
        <taxon>Cyanobacteriota</taxon>
        <taxon>Cyanophyceae</taxon>
        <taxon>Synechococcales</taxon>
        <taxon>Synechococcaceae</taxon>
        <taxon>Synechococcus</taxon>
    </lineage>
</organism>
<keyword id="KW-0456">Lyase</keyword>
<gene>
    <name evidence="1" type="primary">cpcT</name>
</gene>